<protein>
    <recommendedName>
        <fullName evidence="1">tRNA (guanine-N(1)-)-methyltransferase</fullName>
        <ecNumber evidence="1">2.1.1.228</ecNumber>
    </recommendedName>
    <alternativeName>
        <fullName evidence="1">M1G-methyltransferase</fullName>
    </alternativeName>
    <alternativeName>
        <fullName evidence="1">tRNA [GM37] methyltransferase</fullName>
    </alternativeName>
</protein>
<reference key="1">
    <citation type="journal article" date="2007" name="PLoS Genet.">
        <title>A tale of two oxidation states: bacterial colonization of arsenic-rich environments.</title>
        <authorList>
            <person name="Muller D."/>
            <person name="Medigue C."/>
            <person name="Koechler S."/>
            <person name="Barbe V."/>
            <person name="Barakat M."/>
            <person name="Talla E."/>
            <person name="Bonnefoy V."/>
            <person name="Krin E."/>
            <person name="Arsene-Ploetze F."/>
            <person name="Carapito C."/>
            <person name="Chandler M."/>
            <person name="Cournoyer B."/>
            <person name="Cruveiller S."/>
            <person name="Dossat C."/>
            <person name="Duval S."/>
            <person name="Heymann M."/>
            <person name="Leize E."/>
            <person name="Lieutaud A."/>
            <person name="Lievremont D."/>
            <person name="Makita Y."/>
            <person name="Mangenot S."/>
            <person name="Nitschke W."/>
            <person name="Ortet P."/>
            <person name="Perdrial N."/>
            <person name="Schoepp B."/>
            <person name="Siguier P."/>
            <person name="Simeonova D.D."/>
            <person name="Rouy Z."/>
            <person name="Segurens B."/>
            <person name="Turlin E."/>
            <person name="Vallenet D."/>
            <person name="van Dorsselaer A."/>
            <person name="Weiss S."/>
            <person name="Weissenbach J."/>
            <person name="Lett M.-C."/>
            <person name="Danchin A."/>
            <person name="Bertin P.N."/>
        </authorList>
    </citation>
    <scope>NUCLEOTIDE SEQUENCE [LARGE SCALE GENOMIC DNA]</scope>
    <source>
        <strain>ULPAs1</strain>
    </source>
</reference>
<sequence>MQFDVVTLFPEMFTAITQSGITRRAFEQKKCELALWNPRDFTSDRHRTVDDRPYGGGPGMVMMVKPLEAAVLEAKKRQIATDLPTPRVIYLSPQGKALTHERVMQLTAEPGLVLLCGRYEAVDQRFLDVCVDEEISLGDFVLSGGELPAMALMDAVIRQLPGVLHDDASAVEDSFVNGLLDCPHYTRPEVYEGVAVPAVLMGGHHVEIEKWRRERALEATAKKRPDMIVKARAAGLLTRADEKFLSSL</sequence>
<accession>A4G2T7</accession>
<keyword id="KW-0963">Cytoplasm</keyword>
<keyword id="KW-0489">Methyltransferase</keyword>
<keyword id="KW-1185">Reference proteome</keyword>
<keyword id="KW-0949">S-adenosyl-L-methionine</keyword>
<keyword id="KW-0808">Transferase</keyword>
<keyword id="KW-0819">tRNA processing</keyword>
<comment type="function">
    <text evidence="1">Specifically methylates guanosine-37 in various tRNAs.</text>
</comment>
<comment type="catalytic activity">
    <reaction evidence="1">
        <text>guanosine(37) in tRNA + S-adenosyl-L-methionine = N(1)-methylguanosine(37) in tRNA + S-adenosyl-L-homocysteine + H(+)</text>
        <dbReference type="Rhea" id="RHEA:36899"/>
        <dbReference type="Rhea" id="RHEA-COMP:10145"/>
        <dbReference type="Rhea" id="RHEA-COMP:10147"/>
        <dbReference type="ChEBI" id="CHEBI:15378"/>
        <dbReference type="ChEBI" id="CHEBI:57856"/>
        <dbReference type="ChEBI" id="CHEBI:59789"/>
        <dbReference type="ChEBI" id="CHEBI:73542"/>
        <dbReference type="ChEBI" id="CHEBI:74269"/>
        <dbReference type="EC" id="2.1.1.228"/>
    </reaction>
</comment>
<comment type="subunit">
    <text evidence="1">Homodimer.</text>
</comment>
<comment type="subcellular location">
    <subcellularLocation>
        <location evidence="1">Cytoplasm</location>
    </subcellularLocation>
</comment>
<comment type="similarity">
    <text evidence="1">Belongs to the RNA methyltransferase TrmD family.</text>
</comment>
<gene>
    <name evidence="1" type="primary">trmD</name>
    <name type="ordered locus">HEAR0625</name>
</gene>
<name>TRMD_HERAR</name>
<dbReference type="EC" id="2.1.1.228" evidence="1"/>
<dbReference type="EMBL" id="CU207211">
    <property type="protein sequence ID" value="CAL60824.1"/>
    <property type="molecule type" value="Genomic_DNA"/>
</dbReference>
<dbReference type="SMR" id="A4G2T7"/>
<dbReference type="STRING" id="204773.HEAR0625"/>
<dbReference type="KEGG" id="har:HEAR0625"/>
<dbReference type="eggNOG" id="COG0336">
    <property type="taxonomic scope" value="Bacteria"/>
</dbReference>
<dbReference type="HOGENOM" id="CLU_047363_0_2_4"/>
<dbReference type="OrthoDB" id="9807416at2"/>
<dbReference type="Proteomes" id="UP000006697">
    <property type="component" value="Chromosome"/>
</dbReference>
<dbReference type="GO" id="GO:0005829">
    <property type="term" value="C:cytosol"/>
    <property type="evidence" value="ECO:0007669"/>
    <property type="project" value="TreeGrafter"/>
</dbReference>
<dbReference type="GO" id="GO:0052906">
    <property type="term" value="F:tRNA (guanine(37)-N1)-methyltransferase activity"/>
    <property type="evidence" value="ECO:0007669"/>
    <property type="project" value="UniProtKB-UniRule"/>
</dbReference>
<dbReference type="GO" id="GO:0002939">
    <property type="term" value="P:tRNA N1-guanine methylation"/>
    <property type="evidence" value="ECO:0007669"/>
    <property type="project" value="TreeGrafter"/>
</dbReference>
<dbReference type="CDD" id="cd18080">
    <property type="entry name" value="TrmD-like"/>
    <property type="match status" value="1"/>
</dbReference>
<dbReference type="FunFam" id="1.10.1270.20:FF:000001">
    <property type="entry name" value="tRNA (guanine-N(1)-)-methyltransferase"/>
    <property type="match status" value="1"/>
</dbReference>
<dbReference type="FunFam" id="3.40.1280.10:FF:000001">
    <property type="entry name" value="tRNA (guanine-N(1)-)-methyltransferase"/>
    <property type="match status" value="1"/>
</dbReference>
<dbReference type="Gene3D" id="3.40.1280.10">
    <property type="match status" value="1"/>
</dbReference>
<dbReference type="Gene3D" id="1.10.1270.20">
    <property type="entry name" value="tRNA(m1g37)methyltransferase, domain 2"/>
    <property type="match status" value="1"/>
</dbReference>
<dbReference type="HAMAP" id="MF_00605">
    <property type="entry name" value="TrmD"/>
    <property type="match status" value="1"/>
</dbReference>
<dbReference type="InterPro" id="IPR029028">
    <property type="entry name" value="Alpha/beta_knot_MTases"/>
</dbReference>
<dbReference type="InterPro" id="IPR023148">
    <property type="entry name" value="tRNA_m1G_MeTrfase_C_sf"/>
</dbReference>
<dbReference type="InterPro" id="IPR002649">
    <property type="entry name" value="tRNA_m1G_MeTrfase_TrmD"/>
</dbReference>
<dbReference type="InterPro" id="IPR029026">
    <property type="entry name" value="tRNA_m1G_MTases_N"/>
</dbReference>
<dbReference type="InterPro" id="IPR016009">
    <property type="entry name" value="tRNA_MeTrfase_TRMD/TRM10"/>
</dbReference>
<dbReference type="NCBIfam" id="NF000648">
    <property type="entry name" value="PRK00026.1"/>
    <property type="match status" value="1"/>
</dbReference>
<dbReference type="NCBIfam" id="TIGR00088">
    <property type="entry name" value="trmD"/>
    <property type="match status" value="1"/>
</dbReference>
<dbReference type="PANTHER" id="PTHR46417">
    <property type="entry name" value="TRNA (GUANINE-N(1)-)-METHYLTRANSFERASE"/>
    <property type="match status" value="1"/>
</dbReference>
<dbReference type="PANTHER" id="PTHR46417:SF1">
    <property type="entry name" value="TRNA (GUANINE-N(1)-)-METHYLTRANSFERASE"/>
    <property type="match status" value="1"/>
</dbReference>
<dbReference type="Pfam" id="PF01746">
    <property type="entry name" value="tRNA_m1G_MT"/>
    <property type="match status" value="1"/>
</dbReference>
<dbReference type="PIRSF" id="PIRSF000386">
    <property type="entry name" value="tRNA_mtase"/>
    <property type="match status" value="1"/>
</dbReference>
<dbReference type="SUPFAM" id="SSF75217">
    <property type="entry name" value="alpha/beta knot"/>
    <property type="match status" value="1"/>
</dbReference>
<feature type="chain" id="PRO_1000006485" description="tRNA (guanine-N(1)-)-methyltransferase">
    <location>
        <begin position="1"/>
        <end position="248"/>
    </location>
</feature>
<feature type="binding site" evidence="1">
    <location>
        <position position="117"/>
    </location>
    <ligand>
        <name>S-adenosyl-L-methionine</name>
        <dbReference type="ChEBI" id="CHEBI:59789"/>
    </ligand>
</feature>
<feature type="binding site" evidence="1">
    <location>
        <begin position="137"/>
        <end position="142"/>
    </location>
    <ligand>
        <name>S-adenosyl-L-methionine</name>
        <dbReference type="ChEBI" id="CHEBI:59789"/>
    </ligand>
</feature>
<proteinExistence type="inferred from homology"/>
<evidence type="ECO:0000255" key="1">
    <source>
        <dbReference type="HAMAP-Rule" id="MF_00605"/>
    </source>
</evidence>
<organism>
    <name type="scientific">Herminiimonas arsenicoxydans</name>
    <dbReference type="NCBI Taxonomy" id="204773"/>
    <lineage>
        <taxon>Bacteria</taxon>
        <taxon>Pseudomonadati</taxon>
        <taxon>Pseudomonadota</taxon>
        <taxon>Betaproteobacteria</taxon>
        <taxon>Burkholderiales</taxon>
        <taxon>Oxalobacteraceae</taxon>
        <taxon>Herminiimonas</taxon>
    </lineage>
</organism>